<evidence type="ECO:0000269" key="1">
    <source>
    </source>
</evidence>
<evidence type="ECO:0000303" key="2">
    <source>
    </source>
</evidence>
<gene>
    <name evidence="2" type="primary">yadW</name>
    <name type="ordered locus">b4728</name>
</gene>
<protein>
    <recommendedName>
        <fullName evidence="2">Protein YadW</fullName>
    </recommendedName>
</protein>
<sequence length="21" mass="2330">MAIIIGLEFAQLPMSFGAKYE</sequence>
<organism>
    <name type="scientific">Escherichia coli (strain K12)</name>
    <dbReference type="NCBI Taxonomy" id="83333"/>
    <lineage>
        <taxon>Bacteria</taxon>
        <taxon>Pseudomonadati</taxon>
        <taxon>Pseudomonadota</taxon>
        <taxon>Gammaproteobacteria</taxon>
        <taxon>Enterobacterales</taxon>
        <taxon>Enterobacteriaceae</taxon>
        <taxon>Escherichia</taxon>
    </lineage>
</organism>
<feature type="chain" id="PRO_0000445155" description="Protein YadW">
    <location>
        <begin position="1"/>
        <end position="21"/>
    </location>
</feature>
<dbReference type="EMBL" id="U00096">
    <property type="protein sequence ID" value="AYC08166.1"/>
    <property type="molecule type" value="Genomic_DNA"/>
</dbReference>
<dbReference type="EnsemblBacteria" id="AYC08166">
    <property type="protein sequence ID" value="AYC08166"/>
    <property type="gene ID" value="b4728"/>
</dbReference>
<dbReference type="InParanoid" id="P0DPM7"/>
<dbReference type="BioCyc" id="EcoCyc:MONOMER0-4405"/>
<dbReference type="PRO" id="PR:P0DPM7"/>
<dbReference type="Proteomes" id="UP000000625">
    <property type="component" value="Chromosome"/>
</dbReference>
<dbReference type="NCBIfam" id="NF040926">
    <property type="entry name" value="small_YadW"/>
    <property type="match status" value="1"/>
</dbReference>
<reference key="1">
    <citation type="journal article" date="1997" name="Science">
        <title>The complete genome sequence of Escherichia coli K-12.</title>
        <authorList>
            <person name="Blattner F.R."/>
            <person name="Plunkett G. III"/>
            <person name="Bloch C.A."/>
            <person name="Perna N.T."/>
            <person name="Burland V."/>
            <person name="Riley M."/>
            <person name="Collado-Vides J."/>
            <person name="Glasner J.D."/>
            <person name="Rode C.K."/>
            <person name="Mayhew G.F."/>
            <person name="Gregor J."/>
            <person name="Davis N.W."/>
            <person name="Kirkpatrick H.A."/>
            <person name="Goeden M.A."/>
            <person name="Rose D.J."/>
            <person name="Mau B."/>
            <person name="Shao Y."/>
        </authorList>
    </citation>
    <scope>NUCLEOTIDE SEQUENCE [LARGE SCALE GENOMIC DNA]</scope>
    <source>
        <strain>K12 / MG1655 / ATCC 47076</strain>
    </source>
</reference>
<reference key="2">
    <citation type="journal article" date="2018" name="Proteomics">
        <title>Identifying new small proteins in Escherichia coli.</title>
        <authorList>
            <person name="VanOrsdel C.E."/>
            <person name="Kelly J.P."/>
            <person name="Burke B.N."/>
            <person name="Lein C.D."/>
            <person name="Oufiero C.E."/>
            <person name="Sanchez J.F."/>
            <person name="Wimmers L.E."/>
            <person name="Hearn D.J."/>
            <person name="Abuikhdair F.J."/>
            <person name="Barnhart K.R."/>
            <person name="Duley M.L."/>
            <person name="Ernst S.E.G."/>
            <person name="Kenerson B.A."/>
            <person name="Serafin A.J."/>
            <person name="Hemm M.R."/>
        </authorList>
    </citation>
    <scope>IDENTIFICATION</scope>
    <scope>INDUCTION</scope>
</reference>
<proteinExistence type="evidence at protein level"/>
<comment type="induction">
    <text evidence="1">Expressed in both exponential and stationary phase; expression is considerably higher in exponential phase (at protein level).</text>
</comment>
<keyword id="KW-1185">Reference proteome</keyword>
<name>YADW_ECOLI</name>
<accession>P0DPM7</accession>
<accession>A0A385XJ07</accession>